<name>SYE_SACEN</name>
<accession>A4FMP6</accession>
<proteinExistence type="inferred from homology"/>
<evidence type="ECO:0000255" key="1">
    <source>
        <dbReference type="HAMAP-Rule" id="MF_00022"/>
    </source>
</evidence>
<evidence type="ECO:0000256" key="2">
    <source>
        <dbReference type="SAM" id="MobiDB-lite"/>
    </source>
</evidence>
<dbReference type="EC" id="6.1.1.17" evidence="1"/>
<dbReference type="EMBL" id="AM420293">
    <property type="protein sequence ID" value="CAM05321.1"/>
    <property type="molecule type" value="Genomic_DNA"/>
</dbReference>
<dbReference type="RefSeq" id="WP_011874967.1">
    <property type="nucleotide sequence ID" value="NC_009142.1"/>
</dbReference>
<dbReference type="SMR" id="A4FMP6"/>
<dbReference type="STRING" id="405948.SACE_6148"/>
<dbReference type="KEGG" id="sen:SACE_6148"/>
<dbReference type="eggNOG" id="COG0008">
    <property type="taxonomic scope" value="Bacteria"/>
</dbReference>
<dbReference type="HOGENOM" id="CLU_015768_6_1_11"/>
<dbReference type="OrthoDB" id="9807503at2"/>
<dbReference type="Proteomes" id="UP000006728">
    <property type="component" value="Chromosome"/>
</dbReference>
<dbReference type="GO" id="GO:0005829">
    <property type="term" value="C:cytosol"/>
    <property type="evidence" value="ECO:0007669"/>
    <property type="project" value="TreeGrafter"/>
</dbReference>
<dbReference type="GO" id="GO:0005524">
    <property type="term" value="F:ATP binding"/>
    <property type="evidence" value="ECO:0007669"/>
    <property type="project" value="UniProtKB-UniRule"/>
</dbReference>
<dbReference type="GO" id="GO:0004818">
    <property type="term" value="F:glutamate-tRNA ligase activity"/>
    <property type="evidence" value="ECO:0007669"/>
    <property type="project" value="UniProtKB-UniRule"/>
</dbReference>
<dbReference type="GO" id="GO:0000049">
    <property type="term" value="F:tRNA binding"/>
    <property type="evidence" value="ECO:0007669"/>
    <property type="project" value="InterPro"/>
</dbReference>
<dbReference type="GO" id="GO:0008270">
    <property type="term" value="F:zinc ion binding"/>
    <property type="evidence" value="ECO:0007669"/>
    <property type="project" value="InterPro"/>
</dbReference>
<dbReference type="GO" id="GO:0006424">
    <property type="term" value="P:glutamyl-tRNA aminoacylation"/>
    <property type="evidence" value="ECO:0007669"/>
    <property type="project" value="UniProtKB-UniRule"/>
</dbReference>
<dbReference type="CDD" id="cd00808">
    <property type="entry name" value="GluRS_core"/>
    <property type="match status" value="1"/>
</dbReference>
<dbReference type="FunFam" id="3.40.50.620:FF:000149">
    <property type="entry name" value="Glutamate--tRNA ligase"/>
    <property type="match status" value="1"/>
</dbReference>
<dbReference type="Gene3D" id="1.10.10.350">
    <property type="match status" value="1"/>
</dbReference>
<dbReference type="Gene3D" id="1.10.8.70">
    <property type="entry name" value="Glutamate-tRNA synthetase, class I, anticodon-binding domain 1"/>
    <property type="match status" value="1"/>
</dbReference>
<dbReference type="Gene3D" id="1.10.1160.10">
    <property type="entry name" value="Glutamyl-trna Synthetase, Domain 2"/>
    <property type="match status" value="1"/>
</dbReference>
<dbReference type="Gene3D" id="3.90.800.10">
    <property type="entry name" value="Glutamyl-tRNA Synthetase, Domain 3"/>
    <property type="match status" value="1"/>
</dbReference>
<dbReference type="Gene3D" id="3.40.50.620">
    <property type="entry name" value="HUPs"/>
    <property type="match status" value="1"/>
</dbReference>
<dbReference type="HAMAP" id="MF_00022">
    <property type="entry name" value="Glu_tRNA_synth_type1"/>
    <property type="match status" value="1"/>
</dbReference>
<dbReference type="InterPro" id="IPR045462">
    <property type="entry name" value="aa-tRNA-synth_I_cd-bd"/>
</dbReference>
<dbReference type="InterPro" id="IPR020751">
    <property type="entry name" value="aa-tRNA-synth_I_codon-bd_sub2"/>
</dbReference>
<dbReference type="InterPro" id="IPR008925">
    <property type="entry name" value="aa_tRNA-synth_I_cd-bd_sf"/>
</dbReference>
<dbReference type="InterPro" id="IPR004527">
    <property type="entry name" value="Glu-tRNA-ligase_bac/mito"/>
</dbReference>
<dbReference type="InterPro" id="IPR020752">
    <property type="entry name" value="Glu-tRNA-synth_I_codon-bd_sub1"/>
</dbReference>
<dbReference type="InterPro" id="IPR000924">
    <property type="entry name" value="Glu/Gln-tRNA-synth"/>
</dbReference>
<dbReference type="InterPro" id="IPR020058">
    <property type="entry name" value="Glu/Gln-tRNA-synth_Ib_cat-dom"/>
</dbReference>
<dbReference type="InterPro" id="IPR020061">
    <property type="entry name" value="Glu_tRNA_lig_a-bdl"/>
</dbReference>
<dbReference type="InterPro" id="IPR049940">
    <property type="entry name" value="GluQ/Sye"/>
</dbReference>
<dbReference type="InterPro" id="IPR033910">
    <property type="entry name" value="GluRS_core"/>
</dbReference>
<dbReference type="InterPro" id="IPR014729">
    <property type="entry name" value="Rossmann-like_a/b/a_fold"/>
</dbReference>
<dbReference type="NCBIfam" id="TIGR00464">
    <property type="entry name" value="gltX_bact"/>
    <property type="match status" value="1"/>
</dbReference>
<dbReference type="PANTHER" id="PTHR43311">
    <property type="entry name" value="GLUTAMATE--TRNA LIGASE"/>
    <property type="match status" value="1"/>
</dbReference>
<dbReference type="PANTHER" id="PTHR43311:SF2">
    <property type="entry name" value="GLUTAMATE--TRNA LIGASE, MITOCHONDRIAL-RELATED"/>
    <property type="match status" value="1"/>
</dbReference>
<dbReference type="Pfam" id="PF19269">
    <property type="entry name" value="Anticodon_2"/>
    <property type="match status" value="1"/>
</dbReference>
<dbReference type="Pfam" id="PF00749">
    <property type="entry name" value="tRNA-synt_1c"/>
    <property type="match status" value="1"/>
</dbReference>
<dbReference type="PRINTS" id="PR00987">
    <property type="entry name" value="TRNASYNTHGLU"/>
</dbReference>
<dbReference type="SUPFAM" id="SSF48163">
    <property type="entry name" value="An anticodon-binding domain of class I aminoacyl-tRNA synthetases"/>
    <property type="match status" value="1"/>
</dbReference>
<dbReference type="SUPFAM" id="SSF52374">
    <property type="entry name" value="Nucleotidylyl transferase"/>
    <property type="match status" value="1"/>
</dbReference>
<comment type="function">
    <text evidence="1">Catalyzes the attachment of glutamate to tRNA(Glu) in a two-step reaction: glutamate is first activated by ATP to form Glu-AMP and then transferred to the acceptor end of tRNA(Glu).</text>
</comment>
<comment type="catalytic activity">
    <reaction evidence="1">
        <text>tRNA(Glu) + L-glutamate + ATP = L-glutamyl-tRNA(Glu) + AMP + diphosphate</text>
        <dbReference type="Rhea" id="RHEA:23540"/>
        <dbReference type="Rhea" id="RHEA-COMP:9663"/>
        <dbReference type="Rhea" id="RHEA-COMP:9680"/>
        <dbReference type="ChEBI" id="CHEBI:29985"/>
        <dbReference type="ChEBI" id="CHEBI:30616"/>
        <dbReference type="ChEBI" id="CHEBI:33019"/>
        <dbReference type="ChEBI" id="CHEBI:78442"/>
        <dbReference type="ChEBI" id="CHEBI:78520"/>
        <dbReference type="ChEBI" id="CHEBI:456215"/>
        <dbReference type="EC" id="6.1.1.17"/>
    </reaction>
</comment>
<comment type="subunit">
    <text evidence="1">Monomer.</text>
</comment>
<comment type="subcellular location">
    <subcellularLocation>
        <location evidence="1">Cytoplasm</location>
    </subcellularLocation>
</comment>
<comment type="similarity">
    <text evidence="1">Belongs to the class-I aminoacyl-tRNA synthetase family. Glutamate--tRNA ligase type 1 subfamily.</text>
</comment>
<reference key="1">
    <citation type="journal article" date="2007" name="Nat. Biotechnol.">
        <title>Complete genome sequence of the erythromycin-producing bacterium Saccharopolyspora erythraea NRRL23338.</title>
        <authorList>
            <person name="Oliynyk M."/>
            <person name="Samborskyy M."/>
            <person name="Lester J.B."/>
            <person name="Mironenko T."/>
            <person name="Scott N."/>
            <person name="Dickens S."/>
            <person name="Haydock S.F."/>
            <person name="Leadlay P.F."/>
        </authorList>
    </citation>
    <scope>NUCLEOTIDE SEQUENCE [LARGE SCALE GENOMIC DNA]</scope>
    <source>
        <strain>ATCC 11635 / DSM 40517 / JCM 4748 / NBRC 13426 / NCIMB 8594 / NRRL 2338</strain>
    </source>
</reference>
<protein>
    <recommendedName>
        <fullName evidence="1">Glutamate--tRNA ligase</fullName>
        <ecNumber evidence="1">6.1.1.17</ecNumber>
    </recommendedName>
    <alternativeName>
        <fullName evidence="1">Glutamyl-tRNA synthetase</fullName>
        <shortName evidence="1">GluRS</shortName>
    </alternativeName>
</protein>
<keyword id="KW-0030">Aminoacyl-tRNA synthetase</keyword>
<keyword id="KW-0067">ATP-binding</keyword>
<keyword id="KW-0963">Cytoplasm</keyword>
<keyword id="KW-0436">Ligase</keyword>
<keyword id="KW-0547">Nucleotide-binding</keyword>
<keyword id="KW-0648">Protein biosynthesis</keyword>
<keyword id="KW-1185">Reference proteome</keyword>
<feature type="chain" id="PRO_0000330995" description="Glutamate--tRNA ligase">
    <location>
        <begin position="1"/>
        <end position="503"/>
    </location>
</feature>
<feature type="region of interest" description="Disordered" evidence="2">
    <location>
        <begin position="126"/>
        <end position="148"/>
    </location>
</feature>
<feature type="short sequence motif" description="'HIGH' region" evidence="1">
    <location>
        <begin position="26"/>
        <end position="36"/>
    </location>
</feature>
<feature type="short sequence motif" description="'KMSKS' region" evidence="1">
    <location>
        <begin position="270"/>
        <end position="274"/>
    </location>
</feature>
<feature type="compositionally biased region" description="Basic and acidic residues" evidence="2">
    <location>
        <begin position="130"/>
        <end position="148"/>
    </location>
</feature>
<feature type="binding site" evidence="1">
    <location>
        <position position="273"/>
    </location>
    <ligand>
        <name>ATP</name>
        <dbReference type="ChEBI" id="CHEBI:30616"/>
    </ligand>
</feature>
<organism>
    <name type="scientific">Saccharopolyspora erythraea (strain ATCC 11635 / DSM 40517 / JCM 4748 / NBRC 13426 / NCIMB 8594 / NRRL 2338)</name>
    <dbReference type="NCBI Taxonomy" id="405948"/>
    <lineage>
        <taxon>Bacteria</taxon>
        <taxon>Bacillati</taxon>
        <taxon>Actinomycetota</taxon>
        <taxon>Actinomycetes</taxon>
        <taxon>Pseudonocardiales</taxon>
        <taxon>Pseudonocardiaceae</taxon>
        <taxon>Saccharopolyspora</taxon>
    </lineage>
</organism>
<sequence>MSTPEATAEAVSGHEPNRAVRARFCPSPTGTPHVGLVRTALYNWVFARHNQGKLVFRIEDTDASRDSEESYQALLDALRWLGLDWDEGPEVGGEYGPYRQSERRDIYADIARRLLEAGELYESFSTPEEVEARHRAAGRDPKLGYDNADRDLTDEQKAAFRAEGRNAVLRLRMPEHDITFADLVRGEITFPAGSVPDPVLVRGNGDALYTLTNPVDDALMRITHVLRGEDLLSSTPRQIALYDALRRIGVTDFTPEFGHLPFVMGEGNKKLSKRDPQSNLFHHRDRGFLPEGLLNYLALLGWSISEDRDVFTLDEMVEAFEIGRVSSNPARFDQKKADAINSAHLRALAPDDFLERVVPYLVSGGVLPAEPTEEQLATVRAAAPLVQERLIVLSDAVGMMRFLFDGDDFAPDPASAEKALGEDARPVLEAAVSALEALPEWTTEAIEAALKESVVDGLGIKPRKAFAPVRVAVTGRTVSPPLYESMELLGREVSLRRLRAPLG</sequence>
<gene>
    <name evidence="1" type="primary">gltX</name>
    <name type="ordered locus">SACE_6148</name>
</gene>